<reference key="1">
    <citation type="journal article" date="2005" name="Infect. Immun.">
        <title>Whole-genome analyses of speciation events in pathogenic Brucellae.</title>
        <authorList>
            <person name="Chain P.S."/>
            <person name="Comerci D.J."/>
            <person name="Tolmasky M.E."/>
            <person name="Larimer F.W."/>
            <person name="Malfatti S.A."/>
            <person name="Vergez L.M."/>
            <person name="Aguero F."/>
            <person name="Land M.L."/>
            <person name="Ugalde R.A."/>
            <person name="Garcia E."/>
        </authorList>
    </citation>
    <scope>NUCLEOTIDE SEQUENCE [LARGE SCALE GENOMIC DNA]</scope>
    <source>
        <strain>2308</strain>
    </source>
</reference>
<evidence type="ECO:0000255" key="1">
    <source>
        <dbReference type="HAMAP-Rule" id="MF_00215"/>
    </source>
</evidence>
<gene>
    <name evidence="1" type="primary">coaA</name>
    <name type="ordered locus">BAB1_2088</name>
</gene>
<dbReference type="EC" id="2.7.1.33" evidence="1"/>
<dbReference type="EMBL" id="AM040264">
    <property type="protein sequence ID" value="CAJ12044.1"/>
    <property type="molecule type" value="Genomic_DNA"/>
</dbReference>
<dbReference type="RefSeq" id="WP_002965153.1">
    <property type="nucleotide sequence ID" value="NZ_KN046823.1"/>
</dbReference>
<dbReference type="SMR" id="Q2YQY6"/>
<dbReference type="STRING" id="359391.BAB1_2088"/>
<dbReference type="GeneID" id="93017602"/>
<dbReference type="KEGG" id="bmf:BAB1_2088"/>
<dbReference type="PATRIC" id="fig|359391.11.peg.1322"/>
<dbReference type="HOGENOM" id="CLU_053818_1_1_5"/>
<dbReference type="PhylomeDB" id="Q2YQY6"/>
<dbReference type="UniPathway" id="UPA00241">
    <property type="reaction ID" value="UER00352"/>
</dbReference>
<dbReference type="Proteomes" id="UP000002719">
    <property type="component" value="Chromosome I"/>
</dbReference>
<dbReference type="GO" id="GO:0005737">
    <property type="term" value="C:cytoplasm"/>
    <property type="evidence" value="ECO:0007669"/>
    <property type="project" value="UniProtKB-SubCell"/>
</dbReference>
<dbReference type="GO" id="GO:0005524">
    <property type="term" value="F:ATP binding"/>
    <property type="evidence" value="ECO:0007669"/>
    <property type="project" value="UniProtKB-UniRule"/>
</dbReference>
<dbReference type="GO" id="GO:0004594">
    <property type="term" value="F:pantothenate kinase activity"/>
    <property type="evidence" value="ECO:0007669"/>
    <property type="project" value="UniProtKB-UniRule"/>
</dbReference>
<dbReference type="GO" id="GO:0015937">
    <property type="term" value="P:coenzyme A biosynthetic process"/>
    <property type="evidence" value="ECO:0007669"/>
    <property type="project" value="UniProtKB-UniRule"/>
</dbReference>
<dbReference type="CDD" id="cd02025">
    <property type="entry name" value="PanK"/>
    <property type="match status" value="1"/>
</dbReference>
<dbReference type="Gene3D" id="3.40.50.300">
    <property type="entry name" value="P-loop containing nucleotide triphosphate hydrolases"/>
    <property type="match status" value="1"/>
</dbReference>
<dbReference type="HAMAP" id="MF_00215">
    <property type="entry name" value="Pantothen_kinase_1"/>
    <property type="match status" value="1"/>
</dbReference>
<dbReference type="InterPro" id="IPR027417">
    <property type="entry name" value="P-loop_NTPase"/>
</dbReference>
<dbReference type="InterPro" id="IPR004566">
    <property type="entry name" value="PanK"/>
</dbReference>
<dbReference type="InterPro" id="IPR006083">
    <property type="entry name" value="PRK/URK"/>
</dbReference>
<dbReference type="NCBIfam" id="TIGR00554">
    <property type="entry name" value="panK_bact"/>
    <property type="match status" value="1"/>
</dbReference>
<dbReference type="PANTHER" id="PTHR10285">
    <property type="entry name" value="URIDINE KINASE"/>
    <property type="match status" value="1"/>
</dbReference>
<dbReference type="Pfam" id="PF00485">
    <property type="entry name" value="PRK"/>
    <property type="match status" value="1"/>
</dbReference>
<dbReference type="PIRSF" id="PIRSF000545">
    <property type="entry name" value="Pantothenate_kin"/>
    <property type="match status" value="1"/>
</dbReference>
<dbReference type="SUPFAM" id="SSF52540">
    <property type="entry name" value="P-loop containing nucleoside triphosphate hydrolases"/>
    <property type="match status" value="1"/>
</dbReference>
<protein>
    <recommendedName>
        <fullName evidence="1">Pantothenate kinase</fullName>
        <ecNumber evidence="1">2.7.1.33</ecNumber>
    </recommendedName>
    <alternativeName>
        <fullName evidence="1">Pantothenic acid kinase</fullName>
    </alternativeName>
</protein>
<keyword id="KW-0067">ATP-binding</keyword>
<keyword id="KW-0173">Coenzyme A biosynthesis</keyword>
<keyword id="KW-0963">Cytoplasm</keyword>
<keyword id="KW-0418">Kinase</keyword>
<keyword id="KW-0547">Nucleotide-binding</keyword>
<keyword id="KW-1185">Reference proteome</keyword>
<keyword id="KW-0808">Transferase</keyword>
<sequence length="322" mass="37495">MWEKVDQLTPSRYSPYRFFSAQEWAAFRADTPLTLTYEEVKRLRSLGDPIDLDEVRRIYLSLSRLLYAHVEASQLLFRQRQQFLNMEESYKTPFIIGVAGSVAVGKSTMARILKELLARWPSSPKVDLVTTDGFLYPNAVLREQNMMERKGFPESYDIGAVLRFLSAIKAGMSRVRAPLYSHLSYDVLPGEYQIVDKPDILIFEGINVLQVRDLPEDGKMVPFVSDFFDFSIYIDADPRLIHKWYIDRFMRLRETAFRDPQSFFHRYSQLSQEAARSIAEGLWQNINMKNLNENILPTRPRADLILRKGSDHLIEEVALRKI</sequence>
<name>COAA_BRUA2</name>
<proteinExistence type="inferred from homology"/>
<feature type="chain" id="PRO_1000043213" description="Pantothenate kinase">
    <location>
        <begin position="1"/>
        <end position="322"/>
    </location>
</feature>
<feature type="binding site" evidence="1">
    <location>
        <begin position="100"/>
        <end position="107"/>
    </location>
    <ligand>
        <name>ATP</name>
        <dbReference type="ChEBI" id="CHEBI:30616"/>
    </ligand>
</feature>
<comment type="catalytic activity">
    <reaction evidence="1">
        <text>(R)-pantothenate + ATP = (R)-4'-phosphopantothenate + ADP + H(+)</text>
        <dbReference type="Rhea" id="RHEA:16373"/>
        <dbReference type="ChEBI" id="CHEBI:10986"/>
        <dbReference type="ChEBI" id="CHEBI:15378"/>
        <dbReference type="ChEBI" id="CHEBI:29032"/>
        <dbReference type="ChEBI" id="CHEBI:30616"/>
        <dbReference type="ChEBI" id="CHEBI:456216"/>
        <dbReference type="EC" id="2.7.1.33"/>
    </reaction>
</comment>
<comment type="pathway">
    <text evidence="1">Cofactor biosynthesis; coenzyme A biosynthesis; CoA from (R)-pantothenate: step 1/5.</text>
</comment>
<comment type="subcellular location">
    <subcellularLocation>
        <location evidence="1">Cytoplasm</location>
    </subcellularLocation>
</comment>
<comment type="similarity">
    <text evidence="1">Belongs to the prokaryotic pantothenate kinase family.</text>
</comment>
<organism>
    <name type="scientific">Brucella abortus (strain 2308)</name>
    <dbReference type="NCBI Taxonomy" id="359391"/>
    <lineage>
        <taxon>Bacteria</taxon>
        <taxon>Pseudomonadati</taxon>
        <taxon>Pseudomonadota</taxon>
        <taxon>Alphaproteobacteria</taxon>
        <taxon>Hyphomicrobiales</taxon>
        <taxon>Brucellaceae</taxon>
        <taxon>Brucella/Ochrobactrum group</taxon>
        <taxon>Brucella</taxon>
    </lineage>
</organism>
<accession>Q2YQY6</accession>